<gene>
    <name evidence="1" type="primary">glyQ</name>
    <name type="ordered locus">SPP_1496</name>
</gene>
<comment type="catalytic activity">
    <reaction evidence="1">
        <text>tRNA(Gly) + glycine + ATP = glycyl-tRNA(Gly) + AMP + diphosphate</text>
        <dbReference type="Rhea" id="RHEA:16013"/>
        <dbReference type="Rhea" id="RHEA-COMP:9664"/>
        <dbReference type="Rhea" id="RHEA-COMP:9683"/>
        <dbReference type="ChEBI" id="CHEBI:30616"/>
        <dbReference type="ChEBI" id="CHEBI:33019"/>
        <dbReference type="ChEBI" id="CHEBI:57305"/>
        <dbReference type="ChEBI" id="CHEBI:78442"/>
        <dbReference type="ChEBI" id="CHEBI:78522"/>
        <dbReference type="ChEBI" id="CHEBI:456215"/>
        <dbReference type="EC" id="6.1.1.14"/>
    </reaction>
</comment>
<comment type="subunit">
    <text evidence="1">Tetramer of two alpha and two beta subunits.</text>
</comment>
<comment type="subcellular location">
    <subcellularLocation>
        <location evidence="1">Cytoplasm</location>
    </subcellularLocation>
</comment>
<comment type="similarity">
    <text evidence="1">Belongs to the class-II aminoacyl-tRNA synthetase family.</text>
</comment>
<name>SYGA_STRZP</name>
<feature type="chain" id="PRO_1000125561" description="Glycine--tRNA ligase alpha subunit">
    <location>
        <begin position="1"/>
        <end position="305"/>
    </location>
</feature>
<sequence>MSKKLTFQEIILTLQQFWNDQGCMLMQAYDNEKGAGTMSPYTFLRAIGPEPWNAAYVEPSRRPADGRYGENPNRLYQHHQFQVVMKPSPSNIQELYLESLEKLGINPLEHDIRFVEDNWENPSTGSAGLGWEVWLDGMEITQFTYFQQVGGLATGPVTAEVTYGLERLASYIQEVDSVYDIEWADGVKYGEIFIQPEYEHSKYSFEISDQEILLENFDKFEKEAGRALEEGLVHPAYDYVLKCSHTFNLLDARGAVSVTERAGYIARIRNLARVVAKTFVAERKRLGYPLLDEETRVKLLAEDAE</sequence>
<reference key="1">
    <citation type="journal article" date="2010" name="Genome Biol.">
        <title>Structure and dynamics of the pan-genome of Streptococcus pneumoniae and closely related species.</title>
        <authorList>
            <person name="Donati C."/>
            <person name="Hiller N.L."/>
            <person name="Tettelin H."/>
            <person name="Muzzi A."/>
            <person name="Croucher N.J."/>
            <person name="Angiuoli S.V."/>
            <person name="Oggioni M."/>
            <person name="Dunning Hotopp J.C."/>
            <person name="Hu F.Z."/>
            <person name="Riley D.R."/>
            <person name="Covacci A."/>
            <person name="Mitchell T.J."/>
            <person name="Bentley S.D."/>
            <person name="Kilian M."/>
            <person name="Ehrlich G.D."/>
            <person name="Rappuoli R."/>
            <person name="Moxon E.R."/>
            <person name="Masignani V."/>
        </authorList>
    </citation>
    <scope>NUCLEOTIDE SEQUENCE [LARGE SCALE GENOMIC DNA]</scope>
    <source>
        <strain>P1031</strain>
    </source>
</reference>
<evidence type="ECO:0000255" key="1">
    <source>
        <dbReference type="HAMAP-Rule" id="MF_00254"/>
    </source>
</evidence>
<accession>C1CLH5</accession>
<organism>
    <name type="scientific">Streptococcus pneumoniae (strain P1031)</name>
    <dbReference type="NCBI Taxonomy" id="488223"/>
    <lineage>
        <taxon>Bacteria</taxon>
        <taxon>Bacillati</taxon>
        <taxon>Bacillota</taxon>
        <taxon>Bacilli</taxon>
        <taxon>Lactobacillales</taxon>
        <taxon>Streptococcaceae</taxon>
        <taxon>Streptococcus</taxon>
    </lineage>
</organism>
<dbReference type="EC" id="6.1.1.14" evidence="1"/>
<dbReference type="EMBL" id="CP000920">
    <property type="protein sequence ID" value="ACO20350.1"/>
    <property type="molecule type" value="Genomic_DNA"/>
</dbReference>
<dbReference type="RefSeq" id="WP_000038731.1">
    <property type="nucleotide sequence ID" value="NC_012467.1"/>
</dbReference>
<dbReference type="SMR" id="C1CLH5"/>
<dbReference type="GeneID" id="45653275"/>
<dbReference type="KEGG" id="spp:SPP_1496"/>
<dbReference type="HOGENOM" id="CLU_057066_1_0_9"/>
<dbReference type="GO" id="GO:0005829">
    <property type="term" value="C:cytosol"/>
    <property type="evidence" value="ECO:0007669"/>
    <property type="project" value="TreeGrafter"/>
</dbReference>
<dbReference type="GO" id="GO:0005524">
    <property type="term" value="F:ATP binding"/>
    <property type="evidence" value="ECO:0007669"/>
    <property type="project" value="UniProtKB-UniRule"/>
</dbReference>
<dbReference type="GO" id="GO:0140096">
    <property type="term" value="F:catalytic activity, acting on a protein"/>
    <property type="evidence" value="ECO:0007669"/>
    <property type="project" value="UniProtKB-ARBA"/>
</dbReference>
<dbReference type="GO" id="GO:0004820">
    <property type="term" value="F:glycine-tRNA ligase activity"/>
    <property type="evidence" value="ECO:0007669"/>
    <property type="project" value="UniProtKB-UniRule"/>
</dbReference>
<dbReference type="GO" id="GO:0016740">
    <property type="term" value="F:transferase activity"/>
    <property type="evidence" value="ECO:0007669"/>
    <property type="project" value="UniProtKB-ARBA"/>
</dbReference>
<dbReference type="GO" id="GO:0006426">
    <property type="term" value="P:glycyl-tRNA aminoacylation"/>
    <property type="evidence" value="ECO:0007669"/>
    <property type="project" value="UniProtKB-UniRule"/>
</dbReference>
<dbReference type="CDD" id="cd00733">
    <property type="entry name" value="GlyRS_alpha_core"/>
    <property type="match status" value="1"/>
</dbReference>
<dbReference type="FunFam" id="3.30.930.10:FF:000006">
    <property type="entry name" value="Glycine--tRNA ligase alpha subunit"/>
    <property type="match status" value="1"/>
</dbReference>
<dbReference type="Gene3D" id="3.30.930.10">
    <property type="entry name" value="Bira Bifunctional Protein, Domain 2"/>
    <property type="match status" value="1"/>
</dbReference>
<dbReference type="Gene3D" id="1.20.58.180">
    <property type="entry name" value="Class II aaRS and biotin synthetases, domain 2"/>
    <property type="match status" value="1"/>
</dbReference>
<dbReference type="HAMAP" id="MF_00254">
    <property type="entry name" value="Gly_tRNA_synth_alpha"/>
    <property type="match status" value="1"/>
</dbReference>
<dbReference type="InterPro" id="IPR045864">
    <property type="entry name" value="aa-tRNA-synth_II/BPL/LPL"/>
</dbReference>
<dbReference type="InterPro" id="IPR006194">
    <property type="entry name" value="Gly-tRNA-synth_heterodimer"/>
</dbReference>
<dbReference type="InterPro" id="IPR002310">
    <property type="entry name" value="Gly-tRNA_ligase_asu"/>
</dbReference>
<dbReference type="NCBIfam" id="TIGR00388">
    <property type="entry name" value="glyQ"/>
    <property type="match status" value="1"/>
</dbReference>
<dbReference type="NCBIfam" id="NF006827">
    <property type="entry name" value="PRK09348.1"/>
    <property type="match status" value="1"/>
</dbReference>
<dbReference type="PANTHER" id="PTHR30075:SF2">
    <property type="entry name" value="GLYCINE--TRNA LIGASE, CHLOROPLASTIC_MITOCHONDRIAL 2"/>
    <property type="match status" value="1"/>
</dbReference>
<dbReference type="PANTHER" id="PTHR30075">
    <property type="entry name" value="GLYCYL-TRNA SYNTHETASE"/>
    <property type="match status" value="1"/>
</dbReference>
<dbReference type="Pfam" id="PF02091">
    <property type="entry name" value="tRNA-synt_2e"/>
    <property type="match status" value="1"/>
</dbReference>
<dbReference type="PRINTS" id="PR01044">
    <property type="entry name" value="TRNASYNTHGA"/>
</dbReference>
<dbReference type="SUPFAM" id="SSF55681">
    <property type="entry name" value="Class II aaRS and biotin synthetases"/>
    <property type="match status" value="1"/>
</dbReference>
<dbReference type="PROSITE" id="PS50861">
    <property type="entry name" value="AA_TRNA_LIGASE_II_GLYAB"/>
    <property type="match status" value="1"/>
</dbReference>
<proteinExistence type="inferred from homology"/>
<keyword id="KW-0030">Aminoacyl-tRNA synthetase</keyword>
<keyword id="KW-0067">ATP-binding</keyword>
<keyword id="KW-0963">Cytoplasm</keyword>
<keyword id="KW-0436">Ligase</keyword>
<keyword id="KW-0547">Nucleotide-binding</keyword>
<keyword id="KW-0648">Protein biosynthesis</keyword>
<protein>
    <recommendedName>
        <fullName evidence="1">Glycine--tRNA ligase alpha subunit</fullName>
        <ecNumber evidence="1">6.1.1.14</ecNumber>
    </recommendedName>
    <alternativeName>
        <fullName evidence="1">Glycyl-tRNA synthetase alpha subunit</fullName>
        <shortName evidence="1">GlyRS</shortName>
    </alternativeName>
</protein>